<name>UBA4_DEBHA</name>
<accession>Q6BHZ2</accession>
<organism>
    <name type="scientific">Debaryomyces hansenii (strain ATCC 36239 / CBS 767 / BCRC 21394 / JCM 1990 / NBRC 0083 / IGC 2968)</name>
    <name type="common">Yeast</name>
    <name type="synonym">Torulaspora hansenii</name>
    <dbReference type="NCBI Taxonomy" id="284592"/>
    <lineage>
        <taxon>Eukaryota</taxon>
        <taxon>Fungi</taxon>
        <taxon>Dikarya</taxon>
        <taxon>Ascomycota</taxon>
        <taxon>Saccharomycotina</taxon>
        <taxon>Pichiomycetes</taxon>
        <taxon>Debaryomycetaceae</taxon>
        <taxon>Debaryomyces</taxon>
    </lineage>
</organism>
<proteinExistence type="inferred from homology"/>
<sequence length="448" mass="50139">MNDLSREDLLQKIRLLELENAKLKESKSAVSTVSDQYEYDAKYPKIDEYFSSDEYKRYGRQMIVPQFGSLISQVKLKKSKVLFIGAGGLGCPALLYLSASGVGEIGIIDDDLVDISNLHRQVLHTTESVGIHKCESAKRYINKLNPHVKVNTYPFRLSNDNAFDIIEKYDLILDCTDTPATRYLINDVSVICGKTIVSGSGLKTDGQLSILNFHGIGPCYRCFYPKPPSPGSVTSCSDGGVVGPAIGLIGITMALEAIKVITDFYTDETFKPFLSMYSGYPQQQIRVFKMRNKQANCAVCGNNPTVLKSTISDNDIDYAEFCGRVNPNVLAPELRISVQEYHNYINSSQGENSILIDVRPKEQYEITKLPNSINIAWDPTFIKADNIDSYLPSNFDKNTNTFVMCRYGNDSQMATKKLIENFGFNEVKDIKGGINKWSKEIDSKIPQY</sequence>
<gene>
    <name evidence="2" type="primary">UBA4</name>
    <name type="ordered locus">DEHA2G14696g</name>
</gene>
<feature type="chain" id="PRO_0000369225" description="Adenylyltransferase and sulfurtransferase UBA4">
    <location>
        <begin position="1"/>
        <end position="448"/>
    </location>
</feature>
<feature type="domain" description="Rhodanese" evidence="2">
    <location>
        <begin position="349"/>
        <end position="446"/>
    </location>
</feature>
<feature type="active site" description="Glycyl thioester intermediate; for adenylyltransferase activity" evidence="2">
    <location>
        <position position="236"/>
    </location>
</feature>
<feature type="active site" description="Cysteine persulfide intermediate; for sulfurtransferase activity" evidence="2">
    <location>
        <position position="405"/>
    </location>
</feature>
<feature type="binding site" evidence="2">
    <location>
        <position position="88"/>
    </location>
    <ligand>
        <name>ATP</name>
        <dbReference type="ChEBI" id="CHEBI:30616"/>
    </ligand>
</feature>
<feature type="binding site" evidence="2">
    <location>
        <position position="109"/>
    </location>
    <ligand>
        <name>ATP</name>
        <dbReference type="ChEBI" id="CHEBI:30616"/>
    </ligand>
</feature>
<feature type="binding site" evidence="2">
    <location>
        <begin position="116"/>
        <end position="120"/>
    </location>
    <ligand>
        <name>ATP</name>
        <dbReference type="ChEBI" id="CHEBI:30616"/>
    </ligand>
</feature>
<feature type="binding site" evidence="2">
    <location>
        <position position="133"/>
    </location>
    <ligand>
        <name>ATP</name>
        <dbReference type="ChEBI" id="CHEBI:30616"/>
    </ligand>
</feature>
<feature type="binding site" evidence="2">
    <location>
        <begin position="177"/>
        <end position="178"/>
    </location>
    <ligand>
        <name>ATP</name>
        <dbReference type="ChEBI" id="CHEBI:30616"/>
    </ligand>
</feature>
<feature type="binding site" evidence="2">
    <location>
        <position position="219"/>
    </location>
    <ligand>
        <name>Zn(2+)</name>
        <dbReference type="ChEBI" id="CHEBI:29105"/>
    </ligand>
</feature>
<feature type="binding site" evidence="2">
    <location>
        <position position="222"/>
    </location>
    <ligand>
        <name>Zn(2+)</name>
        <dbReference type="ChEBI" id="CHEBI:29105"/>
    </ligand>
</feature>
<feature type="binding site" evidence="2">
    <location>
        <position position="297"/>
    </location>
    <ligand>
        <name>Zn(2+)</name>
        <dbReference type="ChEBI" id="CHEBI:29105"/>
    </ligand>
</feature>
<feature type="binding site" evidence="2">
    <location>
        <position position="300"/>
    </location>
    <ligand>
        <name>Zn(2+)</name>
        <dbReference type="ChEBI" id="CHEBI:29105"/>
    </ligand>
</feature>
<dbReference type="EC" id="2.7.7.-" evidence="2"/>
<dbReference type="EC" id="2.8.1.-" evidence="2"/>
<dbReference type="EMBL" id="CR382139">
    <property type="protein sequence ID" value="CAG90669.1"/>
    <property type="molecule type" value="Genomic_DNA"/>
</dbReference>
<dbReference type="RefSeq" id="XP_462179.1">
    <property type="nucleotide sequence ID" value="XM_462179.1"/>
</dbReference>
<dbReference type="SMR" id="Q6BHZ2"/>
<dbReference type="FunCoup" id="Q6BHZ2">
    <property type="interactions" value="890"/>
</dbReference>
<dbReference type="STRING" id="284592.Q6BHZ2"/>
<dbReference type="GeneID" id="2905098"/>
<dbReference type="KEGG" id="dha:DEHA2G14696g"/>
<dbReference type="VEuPathDB" id="FungiDB:DEHA2G14696g"/>
<dbReference type="eggNOG" id="KOG2017">
    <property type="taxonomic scope" value="Eukaryota"/>
</dbReference>
<dbReference type="HOGENOM" id="CLU_013325_1_2_1"/>
<dbReference type="InParanoid" id="Q6BHZ2"/>
<dbReference type="OMA" id="IPDVGMD"/>
<dbReference type="OrthoDB" id="10261062at2759"/>
<dbReference type="UniPathway" id="UPA00988"/>
<dbReference type="Proteomes" id="UP000000599">
    <property type="component" value="Chromosome G"/>
</dbReference>
<dbReference type="GO" id="GO:0005829">
    <property type="term" value="C:cytosol"/>
    <property type="evidence" value="ECO:0007669"/>
    <property type="project" value="InterPro"/>
</dbReference>
<dbReference type="GO" id="GO:0070566">
    <property type="term" value="F:adenylyltransferase activity"/>
    <property type="evidence" value="ECO:0007669"/>
    <property type="project" value="InterPro"/>
</dbReference>
<dbReference type="GO" id="GO:0005524">
    <property type="term" value="F:ATP binding"/>
    <property type="evidence" value="ECO:0007669"/>
    <property type="project" value="UniProtKB-KW"/>
</dbReference>
<dbReference type="GO" id="GO:0046872">
    <property type="term" value="F:metal ion binding"/>
    <property type="evidence" value="ECO:0007669"/>
    <property type="project" value="UniProtKB-KW"/>
</dbReference>
<dbReference type="GO" id="GO:0004792">
    <property type="term" value="F:thiosulfate-cyanide sulfurtransferase activity"/>
    <property type="evidence" value="ECO:0007669"/>
    <property type="project" value="TreeGrafter"/>
</dbReference>
<dbReference type="GO" id="GO:0042292">
    <property type="term" value="F:URM1 activating enzyme activity"/>
    <property type="evidence" value="ECO:0007669"/>
    <property type="project" value="TreeGrafter"/>
</dbReference>
<dbReference type="GO" id="GO:0032447">
    <property type="term" value="P:protein urmylation"/>
    <property type="evidence" value="ECO:0007669"/>
    <property type="project" value="UniProtKB-UniRule"/>
</dbReference>
<dbReference type="GO" id="GO:0002143">
    <property type="term" value="P:tRNA wobble position uridine thiolation"/>
    <property type="evidence" value="ECO:0007669"/>
    <property type="project" value="InterPro"/>
</dbReference>
<dbReference type="CDD" id="cd00757">
    <property type="entry name" value="ThiF_MoeB_HesA_family"/>
    <property type="match status" value="1"/>
</dbReference>
<dbReference type="FunFam" id="3.40.250.10:FF:000014">
    <property type="entry name" value="Adenylyltransferase and sulfurtransferase MOCS3"/>
    <property type="match status" value="1"/>
</dbReference>
<dbReference type="FunFam" id="3.40.50.720:FF:000033">
    <property type="entry name" value="Adenylyltransferase and sulfurtransferase MOCS3"/>
    <property type="match status" value="1"/>
</dbReference>
<dbReference type="Gene3D" id="3.40.50.720">
    <property type="entry name" value="NAD(P)-binding Rossmann-like Domain"/>
    <property type="match status" value="1"/>
</dbReference>
<dbReference type="Gene3D" id="3.40.250.10">
    <property type="entry name" value="Rhodanese-like domain"/>
    <property type="match status" value="1"/>
</dbReference>
<dbReference type="HAMAP" id="MF_03049">
    <property type="entry name" value="MOCS3_Uba4"/>
    <property type="match status" value="1"/>
</dbReference>
<dbReference type="InterPro" id="IPR028885">
    <property type="entry name" value="MOCS3/Uba4"/>
</dbReference>
<dbReference type="InterPro" id="IPR001763">
    <property type="entry name" value="Rhodanese-like_dom"/>
</dbReference>
<dbReference type="InterPro" id="IPR036873">
    <property type="entry name" value="Rhodanese-like_dom_sf"/>
</dbReference>
<dbReference type="InterPro" id="IPR045886">
    <property type="entry name" value="ThiF/MoeB/HesA"/>
</dbReference>
<dbReference type="InterPro" id="IPR000594">
    <property type="entry name" value="ThiF_NAD_FAD-bd"/>
</dbReference>
<dbReference type="InterPro" id="IPR035985">
    <property type="entry name" value="Ubiquitin-activating_enz"/>
</dbReference>
<dbReference type="PANTHER" id="PTHR10953:SF102">
    <property type="entry name" value="ADENYLYLTRANSFERASE AND SULFURTRANSFERASE MOCS3"/>
    <property type="match status" value="1"/>
</dbReference>
<dbReference type="PANTHER" id="PTHR10953">
    <property type="entry name" value="UBIQUITIN-ACTIVATING ENZYME E1"/>
    <property type="match status" value="1"/>
</dbReference>
<dbReference type="Pfam" id="PF00581">
    <property type="entry name" value="Rhodanese"/>
    <property type="match status" value="1"/>
</dbReference>
<dbReference type="Pfam" id="PF00899">
    <property type="entry name" value="ThiF"/>
    <property type="match status" value="1"/>
</dbReference>
<dbReference type="SMART" id="SM00450">
    <property type="entry name" value="RHOD"/>
    <property type="match status" value="1"/>
</dbReference>
<dbReference type="SUPFAM" id="SSF69572">
    <property type="entry name" value="Activating enzymes of the ubiquitin-like proteins"/>
    <property type="match status" value="1"/>
</dbReference>
<dbReference type="PROSITE" id="PS50206">
    <property type="entry name" value="RHODANESE_3"/>
    <property type="match status" value="1"/>
</dbReference>
<keyword id="KW-0067">ATP-binding</keyword>
<keyword id="KW-0963">Cytoplasm</keyword>
<keyword id="KW-0479">Metal-binding</keyword>
<keyword id="KW-0511">Multifunctional enzyme</keyword>
<keyword id="KW-0547">Nucleotide-binding</keyword>
<keyword id="KW-0548">Nucleotidyltransferase</keyword>
<keyword id="KW-1185">Reference proteome</keyword>
<keyword id="KW-0808">Transferase</keyword>
<keyword id="KW-0819">tRNA processing</keyword>
<keyword id="KW-0833">Ubl conjugation pathway</keyword>
<keyword id="KW-0862">Zinc</keyword>
<evidence type="ECO:0000250" key="1">
    <source>
        <dbReference type="UniProtKB" id="P38820"/>
    </source>
</evidence>
<evidence type="ECO:0000255" key="2">
    <source>
        <dbReference type="HAMAP-Rule" id="MF_03049"/>
    </source>
</evidence>
<protein>
    <recommendedName>
        <fullName evidence="2">Adenylyltransferase and sulfurtransferase UBA4</fullName>
    </recommendedName>
    <alternativeName>
        <fullName evidence="2">Ubiquitin-like protein activator 4</fullName>
    </alternativeName>
    <domain>
        <recommendedName>
            <fullName evidence="2">Adenylyltransferase UBA4</fullName>
            <ecNumber evidence="2">2.7.7.-</ecNumber>
        </recommendedName>
    </domain>
    <domain>
        <recommendedName>
            <fullName evidence="2">Sulfurtransferase UBA4</fullName>
            <ecNumber evidence="2">2.8.1.-</ecNumber>
        </recommendedName>
    </domain>
</protein>
<comment type="function">
    <text evidence="2">Plays a central role in 2-thiolation of mcm(5)S(2)U at tRNA wobble positions of cytosolic tRNA(Lys), tRNA(Glu) and tRNA(Gln). Acts by mediating the C-terminal thiocarboxylation of sulfur carrier URM1. Its N-terminus first activates URM1 as acyl-adenylate (-COAMP), then the persulfide sulfur on the catalytic cysteine is transferred to URM1 to form thiocarboxylation (-COSH) of its C-terminus. The reaction probably involves hydrogen sulfide that is generated from the persulfide intermediate and that acts as a nucleophile towards URM1. Subsequently, a transient disulfide bond is formed. Does not use thiosulfate as sulfur donor; NFS1 probably acting as a sulfur donor for thiocarboxylation reactions. Prior mcm(5) tRNA modification by the elongator complex is required for 2-thiolation. May also be involved in protein urmylation.</text>
</comment>
<comment type="cofactor">
    <cofactor evidence="2">
        <name>Zn(2+)</name>
        <dbReference type="ChEBI" id="CHEBI:29105"/>
    </cofactor>
    <text evidence="2">Binds 1 zinc ion per subunit.</text>
</comment>
<comment type="pathway">
    <text evidence="2">tRNA modification; 5-methoxycarbonylmethyl-2-thiouridine-tRNA biosynthesis.</text>
</comment>
<comment type="subcellular location">
    <subcellularLocation>
        <location evidence="1">Cytoplasm</location>
        <location evidence="1">Cytosol</location>
    </subcellularLocation>
</comment>
<comment type="similarity">
    <text evidence="2">In the N-terminal section; belongs to the HesA/MoeB/ThiF family. UBA4 subfamily.</text>
</comment>
<reference key="1">
    <citation type="journal article" date="2004" name="Nature">
        <title>Genome evolution in yeasts.</title>
        <authorList>
            <person name="Dujon B."/>
            <person name="Sherman D."/>
            <person name="Fischer G."/>
            <person name="Durrens P."/>
            <person name="Casaregola S."/>
            <person name="Lafontaine I."/>
            <person name="de Montigny J."/>
            <person name="Marck C."/>
            <person name="Neuveglise C."/>
            <person name="Talla E."/>
            <person name="Goffard N."/>
            <person name="Frangeul L."/>
            <person name="Aigle M."/>
            <person name="Anthouard V."/>
            <person name="Babour A."/>
            <person name="Barbe V."/>
            <person name="Barnay S."/>
            <person name="Blanchin S."/>
            <person name="Beckerich J.-M."/>
            <person name="Beyne E."/>
            <person name="Bleykasten C."/>
            <person name="Boisrame A."/>
            <person name="Boyer J."/>
            <person name="Cattolico L."/>
            <person name="Confanioleri F."/>
            <person name="de Daruvar A."/>
            <person name="Despons L."/>
            <person name="Fabre E."/>
            <person name="Fairhead C."/>
            <person name="Ferry-Dumazet H."/>
            <person name="Groppi A."/>
            <person name="Hantraye F."/>
            <person name="Hennequin C."/>
            <person name="Jauniaux N."/>
            <person name="Joyet P."/>
            <person name="Kachouri R."/>
            <person name="Kerrest A."/>
            <person name="Koszul R."/>
            <person name="Lemaire M."/>
            <person name="Lesur I."/>
            <person name="Ma L."/>
            <person name="Muller H."/>
            <person name="Nicaud J.-M."/>
            <person name="Nikolski M."/>
            <person name="Oztas S."/>
            <person name="Ozier-Kalogeropoulos O."/>
            <person name="Pellenz S."/>
            <person name="Potier S."/>
            <person name="Richard G.-F."/>
            <person name="Straub M.-L."/>
            <person name="Suleau A."/>
            <person name="Swennen D."/>
            <person name="Tekaia F."/>
            <person name="Wesolowski-Louvel M."/>
            <person name="Westhof E."/>
            <person name="Wirth B."/>
            <person name="Zeniou-Meyer M."/>
            <person name="Zivanovic Y."/>
            <person name="Bolotin-Fukuhara M."/>
            <person name="Thierry A."/>
            <person name="Bouchier C."/>
            <person name="Caudron B."/>
            <person name="Scarpelli C."/>
            <person name="Gaillardin C."/>
            <person name="Weissenbach J."/>
            <person name="Wincker P."/>
            <person name="Souciet J.-L."/>
        </authorList>
    </citation>
    <scope>NUCLEOTIDE SEQUENCE [LARGE SCALE GENOMIC DNA]</scope>
    <source>
        <strain>ATCC 36239 / CBS 767 / BCRC 21394 / JCM 1990 / NBRC 0083 / IGC 2968</strain>
    </source>
</reference>